<reference key="1">
    <citation type="journal article" date="2010" name="J. Bacteriol.">
        <title>Genome sequence of the Fleming strain of Micrococcus luteus, a simple free-living actinobacterium.</title>
        <authorList>
            <person name="Young M."/>
            <person name="Artsatbanov V."/>
            <person name="Beller H.R."/>
            <person name="Chandra G."/>
            <person name="Chater K.F."/>
            <person name="Dover L.G."/>
            <person name="Goh E.B."/>
            <person name="Kahan T."/>
            <person name="Kaprelyants A.S."/>
            <person name="Kyrpides N."/>
            <person name="Lapidus A."/>
            <person name="Lowry S.R."/>
            <person name="Lykidis A."/>
            <person name="Mahillon J."/>
            <person name="Markowitz V."/>
            <person name="Mavromatis K."/>
            <person name="Mukamolova G.V."/>
            <person name="Oren A."/>
            <person name="Rokem J.S."/>
            <person name="Smith M.C."/>
            <person name="Young D.I."/>
            <person name="Greenblatt C.L."/>
        </authorList>
    </citation>
    <scope>NUCLEOTIDE SEQUENCE [LARGE SCALE GENOMIC DNA]</scope>
    <source>
        <strain>ATCC 4698 / DSM 20030 / JCM 1464 / CCM 169 / CCUG 5858 / IAM 1056 / NBRC 3333 / NCIMB 9278 / NCTC 2665 / VKM Ac-2230</strain>
    </source>
</reference>
<gene>
    <name evidence="1" type="primary">leuD</name>
    <name type="ordered locus">Mlut_08750</name>
</gene>
<feature type="chain" id="PRO_1000213353" description="3-isopropylmalate dehydratase small subunit">
    <location>
        <begin position="1"/>
        <end position="201"/>
    </location>
</feature>
<comment type="function">
    <text evidence="1">Catalyzes the isomerization between 2-isopropylmalate and 3-isopropylmalate, via the formation of 2-isopropylmaleate.</text>
</comment>
<comment type="catalytic activity">
    <reaction evidence="1">
        <text>(2R,3S)-3-isopropylmalate = (2S)-2-isopropylmalate</text>
        <dbReference type="Rhea" id="RHEA:32287"/>
        <dbReference type="ChEBI" id="CHEBI:1178"/>
        <dbReference type="ChEBI" id="CHEBI:35121"/>
        <dbReference type="EC" id="4.2.1.33"/>
    </reaction>
</comment>
<comment type="pathway">
    <text evidence="1">Amino-acid biosynthesis; L-leucine biosynthesis; L-leucine from 3-methyl-2-oxobutanoate: step 2/4.</text>
</comment>
<comment type="subunit">
    <text evidence="1">Heterodimer of LeuC and LeuD.</text>
</comment>
<comment type="similarity">
    <text evidence="1">Belongs to the LeuD family. LeuD type 1 subfamily.</text>
</comment>
<organism>
    <name type="scientific">Micrococcus luteus (strain ATCC 4698 / DSM 20030 / JCM 1464 / CCM 169 / CCUG 5858 / IAM 1056 / NBRC 3333 / NCIMB 9278 / NCTC 2665 / VKM Ac-2230)</name>
    <name type="common">Micrococcus lysodeikticus</name>
    <dbReference type="NCBI Taxonomy" id="465515"/>
    <lineage>
        <taxon>Bacteria</taxon>
        <taxon>Bacillati</taxon>
        <taxon>Actinomycetota</taxon>
        <taxon>Actinomycetes</taxon>
        <taxon>Micrococcales</taxon>
        <taxon>Micrococcaceae</taxon>
        <taxon>Micrococcus</taxon>
    </lineage>
</organism>
<protein>
    <recommendedName>
        <fullName evidence="1">3-isopropylmalate dehydratase small subunit</fullName>
        <ecNumber evidence="1">4.2.1.33</ecNumber>
    </recommendedName>
    <alternativeName>
        <fullName evidence="1">Alpha-IPM isomerase</fullName>
        <shortName evidence="1">IPMI</shortName>
    </alternativeName>
    <alternativeName>
        <fullName evidence="1">Isopropylmalate isomerase</fullName>
    </alternativeName>
</protein>
<sequence>MEKFTTHTGVGVPLRASNVDTDQIIPAVYLKRISRTGFEDALFAGWRQDPDFILNTEPFSGGTVLVAGSDFGTGSSREHAVWALKDYGFRAVISPRFADIFRGNSAKQGLVAAQVEQEDVERIWKELENRPGTTVTVDLVTRTVECGDVTAPFQIDDDTRRRLLEGLDDIAVTLGHQAEIDAYEADRPAYKPTTLPARTAG</sequence>
<accession>C5CAC9</accession>
<evidence type="ECO:0000255" key="1">
    <source>
        <dbReference type="HAMAP-Rule" id="MF_01031"/>
    </source>
</evidence>
<proteinExistence type="inferred from homology"/>
<name>LEUD_MICLC</name>
<dbReference type="EC" id="4.2.1.33" evidence="1"/>
<dbReference type="EMBL" id="CP001628">
    <property type="protein sequence ID" value="ACS30398.1"/>
    <property type="molecule type" value="Genomic_DNA"/>
</dbReference>
<dbReference type="RefSeq" id="WP_010078962.1">
    <property type="nucleotide sequence ID" value="NZ_WBMF01000056.1"/>
</dbReference>
<dbReference type="SMR" id="C5CAC9"/>
<dbReference type="STRING" id="465515.Mlut_08750"/>
<dbReference type="EnsemblBacteria" id="ACS30398">
    <property type="protein sequence ID" value="ACS30398"/>
    <property type="gene ID" value="Mlut_08750"/>
</dbReference>
<dbReference type="GeneID" id="93345036"/>
<dbReference type="KEGG" id="mlu:Mlut_08750"/>
<dbReference type="eggNOG" id="COG0066">
    <property type="taxonomic scope" value="Bacteria"/>
</dbReference>
<dbReference type="HOGENOM" id="CLU_081378_0_1_11"/>
<dbReference type="UniPathway" id="UPA00048">
    <property type="reaction ID" value="UER00071"/>
</dbReference>
<dbReference type="Proteomes" id="UP000000738">
    <property type="component" value="Chromosome"/>
</dbReference>
<dbReference type="GO" id="GO:0009316">
    <property type="term" value="C:3-isopropylmalate dehydratase complex"/>
    <property type="evidence" value="ECO:0007669"/>
    <property type="project" value="InterPro"/>
</dbReference>
<dbReference type="GO" id="GO:0003861">
    <property type="term" value="F:3-isopropylmalate dehydratase activity"/>
    <property type="evidence" value="ECO:0007669"/>
    <property type="project" value="UniProtKB-UniRule"/>
</dbReference>
<dbReference type="GO" id="GO:0009098">
    <property type="term" value="P:L-leucine biosynthetic process"/>
    <property type="evidence" value="ECO:0007669"/>
    <property type="project" value="UniProtKB-UniRule"/>
</dbReference>
<dbReference type="CDD" id="cd01577">
    <property type="entry name" value="IPMI_Swivel"/>
    <property type="match status" value="1"/>
</dbReference>
<dbReference type="FunFam" id="3.20.19.10:FF:000003">
    <property type="entry name" value="3-isopropylmalate dehydratase small subunit"/>
    <property type="match status" value="1"/>
</dbReference>
<dbReference type="Gene3D" id="3.20.19.10">
    <property type="entry name" value="Aconitase, domain 4"/>
    <property type="match status" value="1"/>
</dbReference>
<dbReference type="HAMAP" id="MF_01031">
    <property type="entry name" value="LeuD_type1"/>
    <property type="match status" value="1"/>
</dbReference>
<dbReference type="InterPro" id="IPR004431">
    <property type="entry name" value="3-IsopropMal_deHydase_ssu"/>
</dbReference>
<dbReference type="InterPro" id="IPR015928">
    <property type="entry name" value="Aconitase/3IPM_dehydase_swvl"/>
</dbReference>
<dbReference type="InterPro" id="IPR000573">
    <property type="entry name" value="AconitaseA/IPMdHydase_ssu_swvl"/>
</dbReference>
<dbReference type="InterPro" id="IPR033940">
    <property type="entry name" value="IPMI_Swivel"/>
</dbReference>
<dbReference type="InterPro" id="IPR050075">
    <property type="entry name" value="LeuD"/>
</dbReference>
<dbReference type="NCBIfam" id="TIGR00171">
    <property type="entry name" value="leuD"/>
    <property type="match status" value="1"/>
</dbReference>
<dbReference type="NCBIfam" id="NF002458">
    <property type="entry name" value="PRK01641.1"/>
    <property type="match status" value="1"/>
</dbReference>
<dbReference type="PANTHER" id="PTHR43345:SF5">
    <property type="entry name" value="3-ISOPROPYLMALATE DEHYDRATASE SMALL SUBUNIT"/>
    <property type="match status" value="1"/>
</dbReference>
<dbReference type="PANTHER" id="PTHR43345">
    <property type="entry name" value="3-ISOPROPYLMALATE DEHYDRATASE SMALL SUBUNIT 2-RELATED-RELATED"/>
    <property type="match status" value="1"/>
</dbReference>
<dbReference type="Pfam" id="PF00694">
    <property type="entry name" value="Aconitase_C"/>
    <property type="match status" value="1"/>
</dbReference>
<dbReference type="SUPFAM" id="SSF52016">
    <property type="entry name" value="LeuD/IlvD-like"/>
    <property type="match status" value="1"/>
</dbReference>
<keyword id="KW-0028">Amino-acid biosynthesis</keyword>
<keyword id="KW-0100">Branched-chain amino acid biosynthesis</keyword>
<keyword id="KW-0432">Leucine biosynthesis</keyword>
<keyword id="KW-0456">Lyase</keyword>
<keyword id="KW-1185">Reference proteome</keyword>